<organism>
    <name type="scientific">Paraburkholderia phytofirmans (strain DSM 17436 / LMG 22146 / PsJN)</name>
    <name type="common">Burkholderia phytofirmans</name>
    <dbReference type="NCBI Taxonomy" id="398527"/>
    <lineage>
        <taxon>Bacteria</taxon>
        <taxon>Pseudomonadati</taxon>
        <taxon>Pseudomonadota</taxon>
        <taxon>Betaproteobacteria</taxon>
        <taxon>Burkholderiales</taxon>
        <taxon>Burkholderiaceae</taxon>
        <taxon>Paraburkholderia</taxon>
    </lineage>
</organism>
<proteinExistence type="inferred from homology"/>
<comment type="function">
    <text evidence="1">Formation of pseudouridine at positions 38, 39 and 40 in the anticodon stem and loop of transfer RNAs.</text>
</comment>
<comment type="catalytic activity">
    <reaction evidence="1">
        <text>uridine(38/39/40) in tRNA = pseudouridine(38/39/40) in tRNA</text>
        <dbReference type="Rhea" id="RHEA:22376"/>
        <dbReference type="Rhea" id="RHEA-COMP:10085"/>
        <dbReference type="Rhea" id="RHEA-COMP:10087"/>
        <dbReference type="ChEBI" id="CHEBI:65314"/>
        <dbReference type="ChEBI" id="CHEBI:65315"/>
        <dbReference type="EC" id="5.4.99.12"/>
    </reaction>
</comment>
<comment type="subunit">
    <text evidence="1">Homodimer.</text>
</comment>
<comment type="similarity">
    <text evidence="1">Belongs to the tRNA pseudouridine synthase TruA family.</text>
</comment>
<gene>
    <name evidence="1" type="primary">truA</name>
    <name type="ordered locus">Bphyt_6844</name>
</gene>
<sequence length="270" mass="30614">MKRIALGVQYDGSAFCGWQSQPHRNTVQDELERALREFARTPVQTVVAGRTDTGVHGLGQVVHFDTELDRADVSWVRGTNSFLPKTISVQWAKPMPDEFHARFSAFERTYYYVLYVHPVRSPMLATRAGWVHTSLDVDAMQKAAAHLLGEHDFSAFRSSQCQAKTPVKHLYQIDVKQQGDFVHFRFRANAFLHHMVRNLMGCLVYIGGGRRPVEWMAEVLASRDRDFAAPTFMPDGLYLAQVGYPEQFAVPAPQTGSVPWNTVWTEQAQT</sequence>
<accession>B2T9N4</accession>
<reference key="1">
    <citation type="journal article" date="2011" name="J. Bacteriol.">
        <title>Complete genome sequence of the plant growth-promoting endophyte Burkholderia phytofirmans strain PsJN.</title>
        <authorList>
            <person name="Weilharter A."/>
            <person name="Mitter B."/>
            <person name="Shin M.V."/>
            <person name="Chain P.S."/>
            <person name="Nowak J."/>
            <person name="Sessitsch A."/>
        </authorList>
    </citation>
    <scope>NUCLEOTIDE SEQUENCE [LARGE SCALE GENOMIC DNA]</scope>
    <source>
        <strain>DSM 17436 / LMG 22146 / PsJN</strain>
    </source>
</reference>
<dbReference type="EC" id="5.4.99.12" evidence="1"/>
<dbReference type="EMBL" id="CP001053">
    <property type="protein sequence ID" value="ACD21136.1"/>
    <property type="molecule type" value="Genomic_DNA"/>
</dbReference>
<dbReference type="RefSeq" id="WP_012428635.1">
    <property type="nucleotide sequence ID" value="NC_010676.1"/>
</dbReference>
<dbReference type="SMR" id="B2T9N4"/>
<dbReference type="STRING" id="398527.Bphyt_6844"/>
<dbReference type="KEGG" id="bpy:Bphyt_6844"/>
<dbReference type="eggNOG" id="COG0101">
    <property type="taxonomic scope" value="Bacteria"/>
</dbReference>
<dbReference type="HOGENOM" id="CLU_014673_0_2_4"/>
<dbReference type="OrthoDB" id="9811823at2"/>
<dbReference type="Proteomes" id="UP000001739">
    <property type="component" value="Chromosome 2"/>
</dbReference>
<dbReference type="GO" id="GO:0003723">
    <property type="term" value="F:RNA binding"/>
    <property type="evidence" value="ECO:0007669"/>
    <property type="project" value="InterPro"/>
</dbReference>
<dbReference type="GO" id="GO:0160147">
    <property type="term" value="F:tRNA pseudouridine(38-40) synthase activity"/>
    <property type="evidence" value="ECO:0007669"/>
    <property type="project" value="UniProtKB-EC"/>
</dbReference>
<dbReference type="GO" id="GO:0031119">
    <property type="term" value="P:tRNA pseudouridine synthesis"/>
    <property type="evidence" value="ECO:0007669"/>
    <property type="project" value="UniProtKB-UniRule"/>
</dbReference>
<dbReference type="CDD" id="cd02570">
    <property type="entry name" value="PseudoU_synth_EcTruA"/>
    <property type="match status" value="1"/>
</dbReference>
<dbReference type="FunFam" id="3.30.70.580:FF:000001">
    <property type="entry name" value="tRNA pseudouridine synthase A"/>
    <property type="match status" value="1"/>
</dbReference>
<dbReference type="Gene3D" id="3.30.70.660">
    <property type="entry name" value="Pseudouridine synthase I, catalytic domain, C-terminal subdomain"/>
    <property type="match status" value="1"/>
</dbReference>
<dbReference type="Gene3D" id="3.30.70.580">
    <property type="entry name" value="Pseudouridine synthase I, catalytic domain, N-terminal subdomain"/>
    <property type="match status" value="1"/>
</dbReference>
<dbReference type="HAMAP" id="MF_00171">
    <property type="entry name" value="TruA"/>
    <property type="match status" value="1"/>
</dbReference>
<dbReference type="InterPro" id="IPR020103">
    <property type="entry name" value="PsdUridine_synth_cat_dom_sf"/>
</dbReference>
<dbReference type="InterPro" id="IPR001406">
    <property type="entry name" value="PsdUridine_synth_TruA"/>
</dbReference>
<dbReference type="InterPro" id="IPR020097">
    <property type="entry name" value="PsdUridine_synth_TruA_a/b_dom"/>
</dbReference>
<dbReference type="InterPro" id="IPR020095">
    <property type="entry name" value="PsdUridine_synth_TruA_C"/>
</dbReference>
<dbReference type="InterPro" id="IPR020094">
    <property type="entry name" value="TruA/RsuA/RluB/E/F_N"/>
</dbReference>
<dbReference type="NCBIfam" id="TIGR00071">
    <property type="entry name" value="hisT_truA"/>
    <property type="match status" value="1"/>
</dbReference>
<dbReference type="PANTHER" id="PTHR11142">
    <property type="entry name" value="PSEUDOURIDYLATE SYNTHASE"/>
    <property type="match status" value="1"/>
</dbReference>
<dbReference type="PANTHER" id="PTHR11142:SF0">
    <property type="entry name" value="TRNA PSEUDOURIDINE SYNTHASE-LIKE 1"/>
    <property type="match status" value="1"/>
</dbReference>
<dbReference type="Pfam" id="PF01416">
    <property type="entry name" value="PseudoU_synth_1"/>
    <property type="match status" value="2"/>
</dbReference>
<dbReference type="PIRSF" id="PIRSF001430">
    <property type="entry name" value="tRNA_psdUrid_synth"/>
    <property type="match status" value="1"/>
</dbReference>
<dbReference type="SUPFAM" id="SSF55120">
    <property type="entry name" value="Pseudouridine synthase"/>
    <property type="match status" value="1"/>
</dbReference>
<keyword id="KW-0413">Isomerase</keyword>
<keyword id="KW-0819">tRNA processing</keyword>
<name>TRUA_PARPJ</name>
<protein>
    <recommendedName>
        <fullName evidence="1">tRNA pseudouridine synthase A</fullName>
        <ecNumber evidence="1">5.4.99.12</ecNumber>
    </recommendedName>
    <alternativeName>
        <fullName evidence="1">tRNA pseudouridine(38-40) synthase</fullName>
    </alternativeName>
    <alternativeName>
        <fullName evidence="1">tRNA pseudouridylate synthase I</fullName>
    </alternativeName>
    <alternativeName>
        <fullName evidence="1">tRNA-uridine isomerase I</fullName>
    </alternativeName>
</protein>
<feature type="chain" id="PRO_1000097727" description="tRNA pseudouridine synthase A">
    <location>
        <begin position="1"/>
        <end position="270"/>
    </location>
</feature>
<feature type="active site" description="Nucleophile" evidence="1">
    <location>
        <position position="52"/>
    </location>
</feature>
<feature type="binding site" evidence="1">
    <location>
        <position position="110"/>
    </location>
    <ligand>
        <name>substrate</name>
    </ligand>
</feature>
<evidence type="ECO:0000255" key="1">
    <source>
        <dbReference type="HAMAP-Rule" id="MF_00171"/>
    </source>
</evidence>